<sequence length="2890" mass="323750">MSKKIPLKNRLRADFTKTPTDLEVPNLLLLQRDSYDSFLYSKDGKESGIEKVFKSIFPIQDEHNRITLEYAGCEFGKSKYTVREAMERGITYSIPLKIKVRLILWEKDTKSGEKNGIKDIKEQSIFIREIPLMTERTSFIINGVERVVVNQLYRSPGVIFKEEESSTSSNKLIYTGQIIPDRGSWLYFEYDSKDVLYARINKRRKVPVTILFRAMDYQKQDIIKMFYPLVKVRYENDKYLIPFASLDANQRMEFDLKDPQGKIILLAGKKLTSRKIKELKENHLEWVEYPMDILLNRHLAEPVMVGKEVLLDMLTQLDKNRLEKIHDLGVQEFVIINDLALGHDASIIHSFSADHESLKLLKQTEKIDDENALAAIRIHKVMKPGDPVTTEVAKQFVKKLFFDPERYDLTMVGRMKMNHKLGLHVPDYITTLTHEDIITTVKYLMKIKNNQGKIDDRDHLGNRRIRAVGELLANELHSGLVKMQKTIKDKLTTMSGAFDSLMPHDLVNSKMITSTIMEFFMGGQLSQFMDQTNPLSEVTHKRRLSALGEGGLVKDRVGFEARDVHPTYYGQFGPIETPEGQNIGLINTLSTFTRVNDLGFIEAPYKKVVDGKVAGETIYLTAIQEDSHIIAPASTPIDEEGNILGDLIETRVEGEIVLNEKSKVTLMDLSSSMLVGVAASLIPFLEHDDANRALMGTNMQRQAVPLLRSDAPIVGTGIEKIIARDSWGAIKANRAGVVEKIDSKNIYILGEGKEEAYIDAYSLQKNLRTNQNTSFNQVPIVKVGDKVEAGQIIADGPSMDRGELALGKNVRVAFMPWNGYNFEDAIVVSERITKDDVFTSTHIYEKEVDARELKHGVEEFTADIPDVKEEALAHLDESGIVKVGTYVSAGMILVGKTSPKGEIKSTPEERLLRAIFGDKAGHVVNKSLYCPPSLEGTVIDVKVFTKKGYEKDARVLSAYEEEKAKLDMEHFDRLTMLNREELLRVSSLLSQAILEEPFSHNGKDYKEGDQIPKEEIASINRFTLASLVKKYSKEVQNHYEITKNNFLEQKKVLGEEHEEKLSILEKDDILPNGVIKKVKLYIATKRKLKVGDKMAGRHGNKGIVSNIVPVADMPYTADGEPVDIVLNPLGVPSRMNIGQILEMHLGLVGKEFGKQIASMLEDKTKDFAKELRAKMLEIANAINEKDPLTIHVLENCSDEELLEYAKDWSKGVKMAIPVFEGISQEKFYKLFELAKIAMDGKMDLYDGRTGEKMRERVNVGYMYMIKLHHLVDEKVHARSTGPYSLVTHQPVGGKALFGGQRFGEMEVWALEAYGAAHTLKEMLTIKSDDIRGRENAYRAIAKGEQVGESEIPETFYVLTKELQSLALDINIFGDDVDEDGAPRPIMIKEDDRPKDFSSFQLTLASPEKIHSWSYGEVKKPETINYRTLKPERDGLFCMKIFGPTKDYECLCGKYKKPRFKDIGTCEKCGVAITHSKVRRFRMGHIELATPVAHIWYVNSLPSRIGTLLGVKMKDLERVLYYEAYIVKEPGEAAYDNEGTKLVMKYDILNEEQYQNISRRYEDRGFVAQMGGEAIKDLLEEIDLITLLQSLKEEVKDTNSDAKKKKLIKRLKVVESFLNSGNRPEWMMLTVLPVLPPDLRPLVALDGGKFAVSDVNELYRRVINRNQRLKRLMELGAPEIIVRNEKRMLQEAVDVLFDNGRSTNAVKGANKRPLKSLSEIIKGKQGRFRQNLLGKRVDFSGRSVIVVGPNLKMDECGLPKNMALELFKPHLLSKLEERGYATTLKQAKRMIEQKSNEVWECLQEITEGYPVLLNRAPTLHKQSIQAFHPKLIDGKAIQLHPLVCSAFNADFDGDQMAVHVPLSQEAIAECKVLMLSSMNILLPASGKAVAIPSQDMVLGLYYLSLEKSGVKGEHKLFSSVNEIITAIDTKELDIHAKIRVLDQGNIIATSAGRMIIKSILPDFIPTDLWNRPMKKKDIGVLVDYVHKVGGIGITATFLDHLKTLGFRYATKAGISISMEDIITPKDKQKMVEKAKVEVKKIQQQYDQGLLTDQERYNKIIDTWTEVNDRMSKEMMSAIAKDKEGFNSIYMMADSGARGSAAQIRQLSAMRGLMTKPDGSIIETPIISNFKEGLNVLEYFNSTHGARKGLADTALKTANAGYLTRKLIDVSQNVKVVSDDCGTHEGIEITDIAVGSELIEPLEERIFGRVLLEDVIDPITNEILLYADTLIDEEGAKKVVEAGIKSITIRTPVTCKAPKGVCAKCYGLNLGEGKMSYPGEAVGVVAAQSIGEPGTQLTLRTFHVGGTASRSQDEREIVASKEGFVRFYNLRTYTNKEGKNIIANRRNASILVVEPKIKAPFDGELRIETVYEEVVVSVKNGDQEAKFVLRRSDIVKPSELAGVGGKIEGKVYLPYASGHKVHKGGSIADIIQEGWNVPNRIPYASELLVKDNDPIAQDVYAKEKGVIKYYVLEANHLERTHGVKKGDIVSEKGLFAVVADDNGREAARHYIARGSEILIDDNSEVSANSVISKPTTNTFKTIATWDPYNTPIIADFKGKVNFVDVIAGVTVAEKEDENTGITSLVVNDYIPSGYKPSLFLEGANGEEMRYFLEPKTSIAISDGSSVEQAEVLAKIPKATVKSRDITGGLPRVSELFEARKPKPKDVAILSEVDGIVSFGKPIRNKEHIIVTSKDGRLTDYFVDKGKQILVHADEFVHAGEAMTDGVVSSHDILRISGEKELYKYIVSEVQQVYRRQGVSIADKHIEIIVSQMLRQVRILDSGDSKFIEGDLVSKKLFKEENTRVIALKGEPAIAEPVLLGITRAAIGSDSIISAASFQETTKVLTEASIAMKKDFLEDLKENVVLGRMIPVGTGMYKNKKIVLRALEDNSKF</sequence>
<gene>
    <name type="primary">rpoBC</name>
    <name type="ordered locus">jhp_1121</name>
</gene>
<keyword id="KW-0240">DNA-directed RNA polymerase</keyword>
<keyword id="KW-0460">Magnesium</keyword>
<keyword id="KW-0479">Metal-binding</keyword>
<keyword id="KW-0548">Nucleotidyltransferase</keyword>
<keyword id="KW-0804">Transcription</keyword>
<keyword id="KW-0808">Transferase</keyword>
<keyword id="KW-0862">Zinc</keyword>
<comment type="function">
    <text evidence="2 3">DNA-dependent RNA polymerase catalyzes the transcription of DNA into RNA using the four ribonucleoside triphosphates as substrates.</text>
</comment>
<comment type="catalytic activity">
    <reaction evidence="2 3">
        <text>RNA(n) + a ribonucleoside 5'-triphosphate = RNA(n+1) + diphosphate</text>
        <dbReference type="Rhea" id="RHEA:21248"/>
        <dbReference type="Rhea" id="RHEA-COMP:14527"/>
        <dbReference type="Rhea" id="RHEA-COMP:17342"/>
        <dbReference type="ChEBI" id="CHEBI:33019"/>
        <dbReference type="ChEBI" id="CHEBI:61557"/>
        <dbReference type="ChEBI" id="CHEBI:140395"/>
        <dbReference type="EC" id="2.7.7.6"/>
    </reaction>
</comment>
<comment type="cofactor">
    <cofactor evidence="3">
        <name>Mg(2+)</name>
        <dbReference type="ChEBI" id="CHEBI:18420"/>
    </cofactor>
    <text evidence="3">Binds 1 Mg(2+) ion per subunit.</text>
</comment>
<comment type="cofactor">
    <cofactor evidence="3">
        <name>Zn(2+)</name>
        <dbReference type="ChEBI" id="CHEBI:29105"/>
    </cofactor>
    <text evidence="3">Binds 2 Zn(2+) ions per subunit.</text>
</comment>
<comment type="subunit">
    <text evidence="2 3">The RNAP catalytic core consists of 2 alpha, 1 beta/beta' and 1 omega subunit. When a sigma factor is associated with the core the holoenzyme is formed, which can initiate transcription.</text>
</comment>
<comment type="miscellaneous">
    <text evidence="1">Fusion of rpoB and rpoC occurs naturally in Helicobacter species and at least some Wolbachia; the protein has been artificially split in two in H.pylori. The split protein seems to function normally.</text>
</comment>
<comment type="similarity">
    <text evidence="4">In the N-terminal section; belongs to the RNA polymerase beta chain family.</text>
</comment>
<comment type="similarity">
    <text evidence="4">In the C-terminal section; belongs to the RNA polymerase beta' chain family.</text>
</comment>
<organism>
    <name type="scientific">Helicobacter pylori (strain J99 / ATCC 700824)</name>
    <name type="common">Campylobacter pylori J99</name>
    <dbReference type="NCBI Taxonomy" id="85963"/>
    <lineage>
        <taxon>Bacteria</taxon>
        <taxon>Pseudomonadati</taxon>
        <taxon>Campylobacterota</taxon>
        <taxon>Epsilonproteobacteria</taxon>
        <taxon>Campylobacterales</taxon>
        <taxon>Helicobacteraceae</taxon>
        <taxon>Helicobacter</taxon>
    </lineage>
</organism>
<dbReference type="EC" id="2.7.7.6" evidence="2 3"/>
<dbReference type="EMBL" id="AE001439">
    <property type="protein sequence ID" value="AAD06699.1"/>
    <property type="molecule type" value="Genomic_DNA"/>
</dbReference>
<dbReference type="PIR" id="B71846">
    <property type="entry name" value="B71846"/>
</dbReference>
<dbReference type="RefSeq" id="WP_000037845.1">
    <property type="nucleotide sequence ID" value="NC_000921.1"/>
</dbReference>
<dbReference type="SMR" id="Q9ZK23"/>
<dbReference type="IntAct" id="Q9ZK23">
    <property type="interactions" value="1"/>
</dbReference>
<dbReference type="KEGG" id="hpj:jhp_1121"/>
<dbReference type="eggNOG" id="COG0085">
    <property type="taxonomic scope" value="Bacteria"/>
</dbReference>
<dbReference type="eggNOG" id="COG0086">
    <property type="taxonomic scope" value="Bacteria"/>
</dbReference>
<dbReference type="Proteomes" id="UP000000804">
    <property type="component" value="Chromosome"/>
</dbReference>
<dbReference type="GO" id="GO:0000428">
    <property type="term" value="C:DNA-directed RNA polymerase complex"/>
    <property type="evidence" value="ECO:0007669"/>
    <property type="project" value="UniProtKB-KW"/>
</dbReference>
<dbReference type="GO" id="GO:0003677">
    <property type="term" value="F:DNA binding"/>
    <property type="evidence" value="ECO:0007669"/>
    <property type="project" value="UniProtKB-UniRule"/>
</dbReference>
<dbReference type="GO" id="GO:0003899">
    <property type="term" value="F:DNA-directed RNA polymerase activity"/>
    <property type="evidence" value="ECO:0007669"/>
    <property type="project" value="UniProtKB-UniRule"/>
</dbReference>
<dbReference type="GO" id="GO:0000287">
    <property type="term" value="F:magnesium ion binding"/>
    <property type="evidence" value="ECO:0007669"/>
    <property type="project" value="UniProtKB-UniRule"/>
</dbReference>
<dbReference type="GO" id="GO:0032549">
    <property type="term" value="F:ribonucleoside binding"/>
    <property type="evidence" value="ECO:0007669"/>
    <property type="project" value="InterPro"/>
</dbReference>
<dbReference type="GO" id="GO:0008270">
    <property type="term" value="F:zinc ion binding"/>
    <property type="evidence" value="ECO:0007669"/>
    <property type="project" value="UniProtKB-UniRule"/>
</dbReference>
<dbReference type="GO" id="GO:0006351">
    <property type="term" value="P:DNA-templated transcription"/>
    <property type="evidence" value="ECO:0007669"/>
    <property type="project" value="UniProtKB-UniRule"/>
</dbReference>
<dbReference type="CDD" id="cd00653">
    <property type="entry name" value="RNA_pol_B_RPB2"/>
    <property type="match status" value="1"/>
</dbReference>
<dbReference type="CDD" id="cd02655">
    <property type="entry name" value="RNAP_beta'_C"/>
    <property type="match status" value="1"/>
</dbReference>
<dbReference type="CDD" id="cd01609">
    <property type="entry name" value="RNAP_beta'_N"/>
    <property type="match status" value="1"/>
</dbReference>
<dbReference type="FunFam" id="1.10.132.30:FF:000003">
    <property type="entry name" value="DNA-directed RNA polymerase subunit beta"/>
    <property type="match status" value="1"/>
</dbReference>
<dbReference type="Gene3D" id="1.10.132.30">
    <property type="match status" value="1"/>
</dbReference>
<dbReference type="Gene3D" id="1.10.150.390">
    <property type="match status" value="1"/>
</dbReference>
<dbReference type="Gene3D" id="1.10.1790.20">
    <property type="match status" value="1"/>
</dbReference>
<dbReference type="Gene3D" id="1.10.40.90">
    <property type="match status" value="1"/>
</dbReference>
<dbReference type="Gene3D" id="2.40.40.20">
    <property type="match status" value="1"/>
</dbReference>
<dbReference type="Gene3D" id="2.40.50.100">
    <property type="match status" value="4"/>
</dbReference>
<dbReference type="Gene3D" id="2.40.50.150">
    <property type="match status" value="1"/>
</dbReference>
<dbReference type="Gene3D" id="3.90.1100.10">
    <property type="match status" value="2"/>
</dbReference>
<dbReference type="Gene3D" id="2.30.150.10">
    <property type="entry name" value="DNA-directed RNA polymerase, beta subunit, external 1 domain"/>
    <property type="match status" value="1"/>
</dbReference>
<dbReference type="Gene3D" id="2.40.270.10">
    <property type="entry name" value="DNA-directed RNA polymerase, subunit 2, domain 6"/>
    <property type="match status" value="1"/>
</dbReference>
<dbReference type="Gene3D" id="3.90.1800.10">
    <property type="entry name" value="RNA polymerase alpha subunit dimerisation domain"/>
    <property type="match status" value="1"/>
</dbReference>
<dbReference type="Gene3D" id="4.10.860.120">
    <property type="entry name" value="RNA polymerase II, clamp domain"/>
    <property type="match status" value="1"/>
</dbReference>
<dbReference type="Gene3D" id="1.10.274.100">
    <property type="entry name" value="RNA polymerase Rpb1, domain 3"/>
    <property type="match status" value="2"/>
</dbReference>
<dbReference type="Gene3D" id="3.90.1110.10">
    <property type="entry name" value="RNA polymerase Rpb2, domain 2"/>
    <property type="match status" value="1"/>
</dbReference>
<dbReference type="HAMAP" id="MF_01321">
    <property type="entry name" value="RNApol_bact_RpoB"/>
    <property type="match status" value="1"/>
</dbReference>
<dbReference type="HAMAP" id="MF_01322">
    <property type="entry name" value="RNApol_bact_RpoC"/>
    <property type="match status" value="1"/>
</dbReference>
<dbReference type="InterPro" id="IPR042107">
    <property type="entry name" value="DNA-dir_RNA_pol_bsu_ext_1_sf"/>
</dbReference>
<dbReference type="InterPro" id="IPR019462">
    <property type="entry name" value="DNA-dir_RNA_pol_bsu_external_1"/>
</dbReference>
<dbReference type="InterPro" id="IPR015712">
    <property type="entry name" value="DNA-dir_RNA_pol_su2"/>
</dbReference>
<dbReference type="InterPro" id="IPR007120">
    <property type="entry name" value="DNA-dir_RNAP_su2_dom"/>
</dbReference>
<dbReference type="InterPro" id="IPR037033">
    <property type="entry name" value="DNA-dir_RNAP_su2_hyb_sf"/>
</dbReference>
<dbReference type="InterPro" id="IPR045867">
    <property type="entry name" value="DNA-dir_RpoC_beta_prime"/>
</dbReference>
<dbReference type="InterPro" id="IPR012754">
    <property type="entry name" value="DNA-dir_RpoC_beta_prime_bact"/>
</dbReference>
<dbReference type="InterPro" id="IPR000722">
    <property type="entry name" value="RNA_pol_asu"/>
</dbReference>
<dbReference type="InterPro" id="IPR010243">
    <property type="entry name" value="RNA_pol_bsu_bac"/>
</dbReference>
<dbReference type="InterPro" id="IPR007121">
    <property type="entry name" value="RNA_pol_bsu_CS"/>
</dbReference>
<dbReference type="InterPro" id="IPR007644">
    <property type="entry name" value="RNA_pol_bsu_protrusion"/>
</dbReference>
<dbReference type="InterPro" id="IPR006592">
    <property type="entry name" value="RNA_pol_N"/>
</dbReference>
<dbReference type="InterPro" id="IPR007080">
    <property type="entry name" value="RNA_pol_Rpb1_1"/>
</dbReference>
<dbReference type="InterPro" id="IPR007066">
    <property type="entry name" value="RNA_pol_Rpb1_3"/>
</dbReference>
<dbReference type="InterPro" id="IPR042102">
    <property type="entry name" value="RNA_pol_Rpb1_3_sf"/>
</dbReference>
<dbReference type="InterPro" id="IPR007083">
    <property type="entry name" value="RNA_pol_Rpb1_4"/>
</dbReference>
<dbReference type="InterPro" id="IPR007081">
    <property type="entry name" value="RNA_pol_Rpb1_5"/>
</dbReference>
<dbReference type="InterPro" id="IPR044893">
    <property type="entry name" value="RNA_pol_Rpb1_clamp_domain"/>
</dbReference>
<dbReference type="InterPro" id="IPR007642">
    <property type="entry name" value="RNA_pol_Rpb2_2"/>
</dbReference>
<dbReference type="InterPro" id="IPR037034">
    <property type="entry name" value="RNA_pol_Rpb2_2_sf"/>
</dbReference>
<dbReference type="InterPro" id="IPR007645">
    <property type="entry name" value="RNA_pol_Rpb2_3"/>
</dbReference>
<dbReference type="InterPro" id="IPR007641">
    <property type="entry name" value="RNA_pol_Rpb2_7"/>
</dbReference>
<dbReference type="InterPro" id="IPR014724">
    <property type="entry name" value="RNA_pol_RPB2_OB-fold"/>
</dbReference>
<dbReference type="InterPro" id="IPR038120">
    <property type="entry name" value="Rpb1_funnel_sf"/>
</dbReference>
<dbReference type="NCBIfam" id="NF001616">
    <property type="entry name" value="PRK00405.1"/>
    <property type="match status" value="1"/>
</dbReference>
<dbReference type="NCBIfam" id="NF007172">
    <property type="entry name" value="PRK09603.1"/>
    <property type="match status" value="1"/>
</dbReference>
<dbReference type="NCBIfam" id="TIGR02013">
    <property type="entry name" value="rpoB"/>
    <property type="match status" value="1"/>
</dbReference>
<dbReference type="NCBIfam" id="TIGR02386">
    <property type="entry name" value="rpoC_TIGR"/>
    <property type="match status" value="1"/>
</dbReference>
<dbReference type="PANTHER" id="PTHR19376">
    <property type="entry name" value="DNA-DIRECTED RNA POLYMERASE"/>
    <property type="match status" value="1"/>
</dbReference>
<dbReference type="PANTHER" id="PTHR19376:SF54">
    <property type="entry name" value="DNA-DIRECTED RNA POLYMERASE SUBUNIT BETA"/>
    <property type="match status" value="1"/>
</dbReference>
<dbReference type="Pfam" id="PF04997">
    <property type="entry name" value="RNA_pol_Rpb1_1"/>
    <property type="match status" value="1"/>
</dbReference>
<dbReference type="Pfam" id="PF00623">
    <property type="entry name" value="RNA_pol_Rpb1_2"/>
    <property type="match status" value="1"/>
</dbReference>
<dbReference type="Pfam" id="PF04983">
    <property type="entry name" value="RNA_pol_Rpb1_3"/>
    <property type="match status" value="1"/>
</dbReference>
<dbReference type="Pfam" id="PF05000">
    <property type="entry name" value="RNA_pol_Rpb1_4"/>
    <property type="match status" value="1"/>
</dbReference>
<dbReference type="Pfam" id="PF04998">
    <property type="entry name" value="RNA_pol_Rpb1_5"/>
    <property type="match status" value="1"/>
</dbReference>
<dbReference type="Pfam" id="PF04563">
    <property type="entry name" value="RNA_pol_Rpb2_1"/>
    <property type="match status" value="1"/>
</dbReference>
<dbReference type="Pfam" id="PF04561">
    <property type="entry name" value="RNA_pol_Rpb2_2"/>
    <property type="match status" value="2"/>
</dbReference>
<dbReference type="Pfam" id="PF04565">
    <property type="entry name" value="RNA_pol_Rpb2_3"/>
    <property type="match status" value="1"/>
</dbReference>
<dbReference type="Pfam" id="PF10385">
    <property type="entry name" value="RNA_pol_Rpb2_45"/>
    <property type="match status" value="1"/>
</dbReference>
<dbReference type="Pfam" id="PF00562">
    <property type="entry name" value="RNA_pol_Rpb2_6"/>
    <property type="match status" value="1"/>
</dbReference>
<dbReference type="Pfam" id="PF04560">
    <property type="entry name" value="RNA_pol_Rpb2_7"/>
    <property type="match status" value="1"/>
</dbReference>
<dbReference type="SMART" id="SM00663">
    <property type="entry name" value="RPOLA_N"/>
    <property type="match status" value="1"/>
</dbReference>
<dbReference type="SUPFAM" id="SSF64484">
    <property type="entry name" value="beta and beta-prime subunits of DNA dependent RNA-polymerase"/>
    <property type="match status" value="2"/>
</dbReference>
<dbReference type="PROSITE" id="PS01166">
    <property type="entry name" value="RNA_POL_BETA"/>
    <property type="match status" value="1"/>
</dbReference>
<feature type="chain" id="PRO_0000048004" description="Bifunctional DNA-directed RNA polymerase subunit beta-beta'">
    <location>
        <begin position="1"/>
        <end position="2890"/>
    </location>
</feature>
<feature type="region of interest" description="DNA-directed RNA polymerase subunit beta">
    <location>
        <begin position="1"/>
        <end position="1377"/>
    </location>
</feature>
<feature type="region of interest" description="DNA-directed RNA polymerase subunit beta'">
    <location>
        <begin position="1384"/>
        <end position="2890"/>
    </location>
</feature>
<feature type="binding site" evidence="3">
    <location>
        <position position="1449"/>
    </location>
    <ligand>
        <name>Zn(2+)</name>
        <dbReference type="ChEBI" id="CHEBI:29105"/>
        <label>1</label>
    </ligand>
</feature>
<feature type="binding site" evidence="3">
    <location>
        <position position="1451"/>
    </location>
    <ligand>
        <name>Zn(2+)</name>
        <dbReference type="ChEBI" id="CHEBI:29105"/>
        <label>1</label>
    </ligand>
</feature>
<feature type="binding site" evidence="3">
    <location>
        <position position="1465"/>
    </location>
    <ligand>
        <name>Zn(2+)</name>
        <dbReference type="ChEBI" id="CHEBI:29105"/>
        <label>1</label>
    </ligand>
</feature>
<feature type="binding site" evidence="3">
    <location>
        <position position="1468"/>
    </location>
    <ligand>
        <name>Zn(2+)</name>
        <dbReference type="ChEBI" id="CHEBI:29105"/>
        <label>1</label>
    </ligand>
</feature>
<feature type="binding site" evidence="3">
    <location>
        <position position="1849"/>
    </location>
    <ligand>
        <name>Mg(2+)</name>
        <dbReference type="ChEBI" id="CHEBI:18420"/>
    </ligand>
</feature>
<feature type="binding site" evidence="3">
    <location>
        <position position="1851"/>
    </location>
    <ligand>
        <name>Mg(2+)</name>
        <dbReference type="ChEBI" id="CHEBI:18420"/>
    </ligand>
</feature>
<feature type="binding site" evidence="3">
    <location>
        <position position="1853"/>
    </location>
    <ligand>
        <name>Mg(2+)</name>
        <dbReference type="ChEBI" id="CHEBI:18420"/>
    </ligand>
</feature>
<feature type="binding site" evidence="3">
    <location>
        <position position="2179"/>
    </location>
    <ligand>
        <name>Zn(2+)</name>
        <dbReference type="ChEBI" id="CHEBI:29105"/>
        <label>2</label>
    </ligand>
</feature>
<feature type="binding site" evidence="3">
    <location>
        <position position="2253"/>
    </location>
    <ligand>
        <name>Zn(2+)</name>
        <dbReference type="ChEBI" id="CHEBI:29105"/>
        <label>2</label>
    </ligand>
</feature>
<feature type="binding site" evidence="3">
    <location>
        <position position="2260"/>
    </location>
    <ligand>
        <name>Zn(2+)</name>
        <dbReference type="ChEBI" id="CHEBI:29105"/>
        <label>2</label>
    </ligand>
</feature>
<feature type="binding site" evidence="3">
    <location>
        <position position="2263"/>
    </location>
    <ligand>
        <name>Zn(2+)</name>
        <dbReference type="ChEBI" id="CHEBI:29105"/>
        <label>2</label>
    </ligand>
</feature>
<protein>
    <recommendedName>
        <fullName>Bifunctional DNA-directed RNA polymerase subunit beta-beta'</fullName>
        <ecNumber evidence="2 3">2.7.7.6</ecNumber>
    </recommendedName>
    <domain>
        <recommendedName>
            <fullName evidence="2">DNA-directed RNA polymerase subunit beta</fullName>
        </recommendedName>
        <alternativeName>
            <fullName evidence="2">RNA polymerase subunit beta</fullName>
        </alternativeName>
        <alternativeName>
            <fullName evidence="2">Transcriptase subunit beta</fullName>
        </alternativeName>
    </domain>
    <domain>
        <recommendedName>
            <fullName evidence="3">DNA-directed RNA polymerase subunit beta'</fullName>
        </recommendedName>
        <alternativeName>
            <fullName evidence="3">RNA polymerase subunit beta'</fullName>
        </alternativeName>
        <alternativeName>
            <fullName evidence="3">Transcriptase subunit beta'</fullName>
        </alternativeName>
    </domain>
</protein>
<name>RPOBC_HELPJ</name>
<evidence type="ECO:0000250" key="1">
    <source>
        <dbReference type="UniProtKB" id="O25806"/>
    </source>
</evidence>
<evidence type="ECO:0000255" key="2">
    <source>
        <dbReference type="HAMAP-Rule" id="MF_01321"/>
    </source>
</evidence>
<evidence type="ECO:0000255" key="3">
    <source>
        <dbReference type="HAMAP-Rule" id="MF_01322"/>
    </source>
</evidence>
<evidence type="ECO:0000305" key="4"/>
<reference key="1">
    <citation type="journal article" date="1999" name="Nature">
        <title>Genomic sequence comparison of two unrelated isolates of the human gastric pathogen Helicobacter pylori.</title>
        <authorList>
            <person name="Alm R.A."/>
            <person name="Ling L.-S.L."/>
            <person name="Moir D.T."/>
            <person name="King B.L."/>
            <person name="Brown E.D."/>
            <person name="Doig P.C."/>
            <person name="Smith D.R."/>
            <person name="Noonan B."/>
            <person name="Guild B.C."/>
            <person name="deJonge B.L."/>
            <person name="Carmel G."/>
            <person name="Tummino P.J."/>
            <person name="Caruso A."/>
            <person name="Uria-Nickelsen M."/>
            <person name="Mills D.M."/>
            <person name="Ives C."/>
            <person name="Gibson R."/>
            <person name="Merberg D."/>
            <person name="Mills S.D."/>
            <person name="Jiang Q."/>
            <person name="Taylor D.E."/>
            <person name="Vovis G.F."/>
            <person name="Trust T.J."/>
        </authorList>
    </citation>
    <scope>NUCLEOTIDE SEQUENCE [LARGE SCALE GENOMIC DNA]</scope>
    <source>
        <strain>J99 / ATCC 700824</strain>
    </source>
</reference>
<proteinExistence type="inferred from homology"/>
<accession>Q9ZK23</accession>